<evidence type="ECO:0000255" key="1">
    <source>
        <dbReference type="PROSITE-ProRule" id="PRU00285"/>
    </source>
</evidence>
<evidence type="ECO:0000256" key="2">
    <source>
        <dbReference type="SAM" id="MobiDB-lite"/>
    </source>
</evidence>
<evidence type="ECO:0000269" key="3">
    <source>
    </source>
</evidence>
<evidence type="ECO:0000305" key="4"/>
<sequence>MTELFDTAVTSLLHLPEVLDRLGAAAGDRRSAGDHAHHAAHGHGQHRISGIGGGAPVDIMETPGEYAFVLDVPGLSKSDIQVTLEEDRVLVMKSSNGAGNGKRKREEEEGECKYIRLERRASPRAFARKFRLPEDADTGGISARCENGVLTVTVKKRPPPEKKTKSVQVTIA</sequence>
<name>HS186_ORYSJ</name>
<accession>Q6K7E9</accession>
<accession>A0A0P0VQK7</accession>
<keyword id="KW-0963">Cytoplasm</keyword>
<keyword id="KW-1185">Reference proteome</keyword>
<keyword id="KW-0346">Stress response</keyword>
<proteinExistence type="evidence at transcript level"/>
<dbReference type="EMBL" id="AP004849">
    <property type="protein sequence ID" value="BAD19533.1"/>
    <property type="molecule type" value="Genomic_DNA"/>
</dbReference>
<dbReference type="EMBL" id="AP008208">
    <property type="protein sequence ID" value="BAF10231.1"/>
    <property type="molecule type" value="Genomic_DNA"/>
</dbReference>
<dbReference type="EMBL" id="AP014958">
    <property type="protein sequence ID" value="BAS81240.1"/>
    <property type="molecule type" value="Genomic_DNA"/>
</dbReference>
<dbReference type="EMBL" id="CM000139">
    <property type="protein sequence ID" value="EAZ24841.1"/>
    <property type="molecule type" value="Genomic_DNA"/>
</dbReference>
<dbReference type="EMBL" id="AK119261">
    <property type="protein sequence ID" value="BAG99605.1"/>
    <property type="molecule type" value="mRNA"/>
</dbReference>
<dbReference type="RefSeq" id="XP_015623982.1">
    <property type="nucleotide sequence ID" value="XM_015768496.1"/>
</dbReference>
<dbReference type="SMR" id="Q6K7E9"/>
<dbReference type="FunCoup" id="Q6K7E9">
    <property type="interactions" value="369"/>
</dbReference>
<dbReference type="STRING" id="39947.Q6K7E9"/>
<dbReference type="CarbonylDB" id="Q6K7E9"/>
<dbReference type="PaxDb" id="39947-Q6K7E9"/>
<dbReference type="EnsemblPlants" id="Os02t0782500-01">
    <property type="protein sequence ID" value="Os02t0782500-01"/>
    <property type="gene ID" value="Os02g0782500"/>
</dbReference>
<dbReference type="Gramene" id="Os02t0782500-01">
    <property type="protein sequence ID" value="Os02t0782500-01"/>
    <property type="gene ID" value="Os02g0782500"/>
</dbReference>
<dbReference type="KEGG" id="dosa:Os02g0782500"/>
<dbReference type="eggNOG" id="KOG0710">
    <property type="taxonomic scope" value="Eukaryota"/>
</dbReference>
<dbReference type="HOGENOM" id="CLU_046737_5_1_1"/>
<dbReference type="InParanoid" id="Q6K7E9"/>
<dbReference type="OMA" id="HETSENR"/>
<dbReference type="OrthoDB" id="1431247at2759"/>
<dbReference type="Proteomes" id="UP000000763">
    <property type="component" value="Chromosome 2"/>
</dbReference>
<dbReference type="Proteomes" id="UP000007752">
    <property type="component" value="Chromosome 2"/>
</dbReference>
<dbReference type="Proteomes" id="UP000059680">
    <property type="component" value="Chromosome 2"/>
</dbReference>
<dbReference type="ExpressionAtlas" id="Q6K7E9">
    <property type="expression patterns" value="baseline and differential"/>
</dbReference>
<dbReference type="GO" id="GO:0005737">
    <property type="term" value="C:cytoplasm"/>
    <property type="evidence" value="ECO:0007669"/>
    <property type="project" value="UniProtKB-SubCell"/>
</dbReference>
<dbReference type="GO" id="GO:0051082">
    <property type="term" value="F:unfolded protein binding"/>
    <property type="evidence" value="ECO:0000318"/>
    <property type="project" value="GO_Central"/>
</dbReference>
<dbReference type="GO" id="GO:0051259">
    <property type="term" value="P:protein complex oligomerization"/>
    <property type="evidence" value="ECO:0000318"/>
    <property type="project" value="GO_Central"/>
</dbReference>
<dbReference type="GO" id="GO:0006457">
    <property type="term" value="P:protein folding"/>
    <property type="evidence" value="ECO:0000318"/>
    <property type="project" value="GO_Central"/>
</dbReference>
<dbReference type="GO" id="GO:0009408">
    <property type="term" value="P:response to heat"/>
    <property type="evidence" value="ECO:0000270"/>
    <property type="project" value="UniProtKB"/>
</dbReference>
<dbReference type="GO" id="GO:0042542">
    <property type="term" value="P:response to hydrogen peroxide"/>
    <property type="evidence" value="ECO:0000318"/>
    <property type="project" value="GO_Central"/>
</dbReference>
<dbReference type="GO" id="GO:0009651">
    <property type="term" value="P:response to salt stress"/>
    <property type="evidence" value="ECO:0000318"/>
    <property type="project" value="GO_Central"/>
</dbReference>
<dbReference type="CDD" id="cd06464">
    <property type="entry name" value="ACD_sHsps-like"/>
    <property type="match status" value="1"/>
</dbReference>
<dbReference type="FunFam" id="2.60.40.790:FF:000054">
    <property type="entry name" value="17.4 kDa class III heat shock protein isoform A"/>
    <property type="match status" value="1"/>
</dbReference>
<dbReference type="Gene3D" id="2.60.40.790">
    <property type="match status" value="1"/>
</dbReference>
<dbReference type="InterPro" id="IPR002068">
    <property type="entry name" value="A-crystallin/Hsp20_dom"/>
</dbReference>
<dbReference type="InterPro" id="IPR008978">
    <property type="entry name" value="HSP20-like_chaperone"/>
</dbReference>
<dbReference type="InterPro" id="IPR031107">
    <property type="entry name" value="Small_HSP"/>
</dbReference>
<dbReference type="PANTHER" id="PTHR11527">
    <property type="entry name" value="HEAT-SHOCK PROTEIN 20 FAMILY MEMBER"/>
    <property type="match status" value="1"/>
</dbReference>
<dbReference type="Pfam" id="PF00011">
    <property type="entry name" value="HSP20"/>
    <property type="match status" value="1"/>
</dbReference>
<dbReference type="SUPFAM" id="SSF49764">
    <property type="entry name" value="HSP20-like chaperones"/>
    <property type="match status" value="1"/>
</dbReference>
<dbReference type="PROSITE" id="PS01031">
    <property type="entry name" value="SHSP"/>
    <property type="match status" value="1"/>
</dbReference>
<gene>
    <name type="primary">HSP18.6</name>
    <name type="ordered locus">Os02g0782500</name>
    <name type="ordered locus">LOC_Os02g54140</name>
    <name type="ORF">OJ1311_D08.6-1</name>
    <name type="ORF">OsJ_08623</name>
</gene>
<comment type="subunit">
    <text>May form oligomeric structures.</text>
</comment>
<comment type="subcellular location">
    <subcellularLocation>
        <location evidence="4">Cytoplasm</location>
    </subcellularLocation>
</comment>
<comment type="induction">
    <text evidence="3">By heat shock.</text>
</comment>
<comment type="similarity">
    <text evidence="1">Belongs to the small heat shock protein (HSP20) family.</text>
</comment>
<organism>
    <name type="scientific">Oryza sativa subsp. japonica</name>
    <name type="common">Rice</name>
    <dbReference type="NCBI Taxonomy" id="39947"/>
    <lineage>
        <taxon>Eukaryota</taxon>
        <taxon>Viridiplantae</taxon>
        <taxon>Streptophyta</taxon>
        <taxon>Embryophyta</taxon>
        <taxon>Tracheophyta</taxon>
        <taxon>Spermatophyta</taxon>
        <taxon>Magnoliopsida</taxon>
        <taxon>Liliopsida</taxon>
        <taxon>Poales</taxon>
        <taxon>Poaceae</taxon>
        <taxon>BOP clade</taxon>
        <taxon>Oryzoideae</taxon>
        <taxon>Oryzeae</taxon>
        <taxon>Oryzinae</taxon>
        <taxon>Oryza</taxon>
        <taxon>Oryza sativa</taxon>
    </lineage>
</organism>
<feature type="chain" id="PRO_0000387469" description="18.6 kDa class III heat shock protein">
    <location>
        <begin position="1"/>
        <end position="172"/>
    </location>
</feature>
<feature type="domain" description="sHSP" evidence="1">
    <location>
        <begin position="48"/>
        <end position="172"/>
    </location>
</feature>
<feature type="region of interest" description="Disordered" evidence="2">
    <location>
        <begin position="29"/>
        <end position="54"/>
    </location>
</feature>
<protein>
    <recommendedName>
        <fullName>18.6 kDa class III heat shock protein</fullName>
    </recommendedName>
    <alternativeName>
        <fullName>18.6 kDa heat shock protein</fullName>
        <shortName>OsHsp18.6</shortName>
    </alternativeName>
</protein>
<reference key="1">
    <citation type="journal article" date="2005" name="Nature">
        <title>The map-based sequence of the rice genome.</title>
        <authorList>
            <consortium name="International rice genome sequencing project (IRGSP)"/>
        </authorList>
    </citation>
    <scope>NUCLEOTIDE SEQUENCE [LARGE SCALE GENOMIC DNA]</scope>
    <source>
        <strain>cv. Nipponbare</strain>
    </source>
</reference>
<reference key="2">
    <citation type="journal article" date="2008" name="Nucleic Acids Res.">
        <title>The rice annotation project database (RAP-DB): 2008 update.</title>
        <authorList>
            <consortium name="The rice annotation project (RAP)"/>
        </authorList>
    </citation>
    <scope>GENOME REANNOTATION</scope>
    <source>
        <strain>cv. Nipponbare</strain>
    </source>
</reference>
<reference key="3">
    <citation type="journal article" date="2013" name="Rice">
        <title>Improvement of the Oryza sativa Nipponbare reference genome using next generation sequence and optical map data.</title>
        <authorList>
            <person name="Kawahara Y."/>
            <person name="de la Bastide M."/>
            <person name="Hamilton J.P."/>
            <person name="Kanamori H."/>
            <person name="McCombie W.R."/>
            <person name="Ouyang S."/>
            <person name="Schwartz D.C."/>
            <person name="Tanaka T."/>
            <person name="Wu J."/>
            <person name="Zhou S."/>
            <person name="Childs K.L."/>
            <person name="Davidson R.M."/>
            <person name="Lin H."/>
            <person name="Quesada-Ocampo L."/>
            <person name="Vaillancourt B."/>
            <person name="Sakai H."/>
            <person name="Lee S.S."/>
            <person name="Kim J."/>
            <person name="Numa H."/>
            <person name="Itoh T."/>
            <person name="Buell C.R."/>
            <person name="Matsumoto T."/>
        </authorList>
    </citation>
    <scope>GENOME REANNOTATION</scope>
    <source>
        <strain>cv. Nipponbare</strain>
    </source>
</reference>
<reference key="4">
    <citation type="journal article" date="2005" name="PLoS Biol.">
        <title>The genomes of Oryza sativa: a history of duplications.</title>
        <authorList>
            <person name="Yu J."/>
            <person name="Wang J."/>
            <person name="Lin W."/>
            <person name="Li S."/>
            <person name="Li H."/>
            <person name="Zhou J."/>
            <person name="Ni P."/>
            <person name="Dong W."/>
            <person name="Hu S."/>
            <person name="Zeng C."/>
            <person name="Zhang J."/>
            <person name="Zhang Y."/>
            <person name="Li R."/>
            <person name="Xu Z."/>
            <person name="Li S."/>
            <person name="Li X."/>
            <person name="Zheng H."/>
            <person name="Cong L."/>
            <person name="Lin L."/>
            <person name="Yin J."/>
            <person name="Geng J."/>
            <person name="Li G."/>
            <person name="Shi J."/>
            <person name="Liu J."/>
            <person name="Lv H."/>
            <person name="Li J."/>
            <person name="Wang J."/>
            <person name="Deng Y."/>
            <person name="Ran L."/>
            <person name="Shi X."/>
            <person name="Wang X."/>
            <person name="Wu Q."/>
            <person name="Li C."/>
            <person name="Ren X."/>
            <person name="Wang J."/>
            <person name="Wang X."/>
            <person name="Li D."/>
            <person name="Liu D."/>
            <person name="Zhang X."/>
            <person name="Ji Z."/>
            <person name="Zhao W."/>
            <person name="Sun Y."/>
            <person name="Zhang Z."/>
            <person name="Bao J."/>
            <person name="Han Y."/>
            <person name="Dong L."/>
            <person name="Ji J."/>
            <person name="Chen P."/>
            <person name="Wu S."/>
            <person name="Liu J."/>
            <person name="Xiao Y."/>
            <person name="Bu D."/>
            <person name="Tan J."/>
            <person name="Yang L."/>
            <person name="Ye C."/>
            <person name="Zhang J."/>
            <person name="Xu J."/>
            <person name="Zhou Y."/>
            <person name="Yu Y."/>
            <person name="Zhang B."/>
            <person name="Zhuang S."/>
            <person name="Wei H."/>
            <person name="Liu B."/>
            <person name="Lei M."/>
            <person name="Yu H."/>
            <person name="Li Y."/>
            <person name="Xu H."/>
            <person name="Wei S."/>
            <person name="He X."/>
            <person name="Fang L."/>
            <person name="Zhang Z."/>
            <person name="Zhang Y."/>
            <person name="Huang X."/>
            <person name="Su Z."/>
            <person name="Tong W."/>
            <person name="Li J."/>
            <person name="Tong Z."/>
            <person name="Li S."/>
            <person name="Ye J."/>
            <person name="Wang L."/>
            <person name="Fang L."/>
            <person name="Lei T."/>
            <person name="Chen C.-S."/>
            <person name="Chen H.-C."/>
            <person name="Xu Z."/>
            <person name="Li H."/>
            <person name="Huang H."/>
            <person name="Zhang F."/>
            <person name="Xu H."/>
            <person name="Li N."/>
            <person name="Zhao C."/>
            <person name="Li S."/>
            <person name="Dong L."/>
            <person name="Huang Y."/>
            <person name="Li L."/>
            <person name="Xi Y."/>
            <person name="Qi Q."/>
            <person name="Li W."/>
            <person name="Zhang B."/>
            <person name="Hu W."/>
            <person name="Zhang Y."/>
            <person name="Tian X."/>
            <person name="Jiao Y."/>
            <person name="Liang X."/>
            <person name="Jin J."/>
            <person name="Gao L."/>
            <person name="Zheng W."/>
            <person name="Hao B."/>
            <person name="Liu S.-M."/>
            <person name="Wang W."/>
            <person name="Yuan L."/>
            <person name="Cao M."/>
            <person name="McDermott J."/>
            <person name="Samudrala R."/>
            <person name="Wang J."/>
            <person name="Wong G.K.-S."/>
            <person name="Yang H."/>
        </authorList>
    </citation>
    <scope>NUCLEOTIDE SEQUENCE [LARGE SCALE GENOMIC DNA]</scope>
    <source>
        <strain>cv. Nipponbare</strain>
    </source>
</reference>
<reference key="5">
    <citation type="journal article" date="2003" name="Science">
        <title>Collection, mapping, and annotation of over 28,000 cDNA clones from japonica rice.</title>
        <authorList>
            <consortium name="The rice full-length cDNA consortium"/>
        </authorList>
    </citation>
    <scope>NUCLEOTIDE SEQUENCE [LARGE SCALE MRNA]</scope>
    <source>
        <strain>cv. Nipponbare</strain>
    </source>
</reference>
<reference key="6">
    <citation type="journal article" date="2009" name="BMC Genomics">
        <title>Rice sHsp genes: genomic organization and expression profiling under stress and development.</title>
        <authorList>
            <person name="Sarkar N.K."/>
            <person name="Kim Y.-K."/>
            <person name="Grover A."/>
        </authorList>
    </citation>
    <scope>INDUCTION</scope>
    <scope>GENE FAMILY</scope>
</reference>